<comment type="function">
    <text evidence="1">Transport protein for sugar phosphate uptake.</text>
</comment>
<comment type="subcellular location">
    <subcellularLocation>
        <location evidence="3">Cell membrane</location>
        <topology evidence="3">Multi-pass membrane protein</topology>
    </subcellularLocation>
</comment>
<comment type="similarity">
    <text evidence="3">Belongs to the major facilitator superfamily. Organophosphate:Pi antiporter (OPA) (TC 2.A.1.4) family.</text>
</comment>
<protein>
    <recommendedName>
        <fullName>Probable hexose phosphate transport protein</fullName>
    </recommendedName>
</protein>
<feature type="chain" id="PRO_0000199889" description="Probable hexose phosphate transport protein">
    <location>
        <begin position="1"/>
        <end position="456"/>
    </location>
</feature>
<feature type="transmembrane region" description="Helical" evidence="2">
    <location>
        <begin position="34"/>
        <end position="54"/>
    </location>
</feature>
<feature type="transmembrane region" description="Helical" evidence="2">
    <location>
        <begin position="70"/>
        <end position="90"/>
    </location>
</feature>
<feature type="transmembrane region" description="Helical" evidence="2">
    <location>
        <begin position="113"/>
        <end position="133"/>
    </location>
</feature>
<feature type="transmembrane region" description="Helical" evidence="2">
    <location>
        <begin position="161"/>
        <end position="181"/>
    </location>
</feature>
<feature type="transmembrane region" description="Helical" evidence="2">
    <location>
        <begin position="185"/>
        <end position="205"/>
    </location>
</feature>
<feature type="transmembrane region" description="Helical" evidence="2">
    <location>
        <begin position="257"/>
        <end position="277"/>
    </location>
</feature>
<feature type="transmembrane region" description="Helical" evidence="2">
    <location>
        <begin position="302"/>
        <end position="322"/>
    </location>
</feature>
<feature type="transmembrane region" description="Helical" evidence="2">
    <location>
        <begin position="331"/>
        <end position="351"/>
    </location>
</feature>
<feature type="transmembrane region" description="Helical" evidence="2">
    <location>
        <begin position="363"/>
        <end position="383"/>
    </location>
</feature>
<feature type="transmembrane region" description="Helical" evidence="2">
    <location>
        <begin position="394"/>
        <end position="414"/>
    </location>
</feature>
<feature type="transmembrane region" description="Helical" evidence="2">
    <location>
        <begin position="421"/>
        <end position="441"/>
    </location>
</feature>
<evidence type="ECO:0000250" key="1"/>
<evidence type="ECO:0000255" key="2"/>
<evidence type="ECO:0000305" key="3"/>
<gene>
    <name type="ordered locus">CT_544</name>
</gene>
<sequence length="456" mass="51729">MNLWTKIFQPPCHIKEISDPELVKKQYKYWRMRIFYSMFLGYVFFYFTRKSFTFAMPTLIADLGFDKAQLGIIGSTLYITYGISKFVSGVMSDQSNPRYFMAIGLIITGISNIFFGLSSTIPLFVLFWGINGWFQGWGWPPCARLLTHWYSKSERGTWWSVWSTSHNIGGALIPVLTGVAIDYTGWRGAMFIPGIICIIMGFILIDRLRDTPQSLGLPAIEKFRKEEDAHPHEETTADILEEEAERELSTKEILFTYVLSNKWLWFLSFASFFIYVVRMAVNDWSALYLIETKDYSTVKANLCVSLFEIGGLFGMLLAGWLSDTISKGKRGPMNVVFSLGLLVSILGLWGTRDYFVWWIDGTFLFIIGFFLFGPQMMIGLAAAELSHKKAAGTASGFTGWFAYFGAAFAGYPLGKVAQDWGWHGFFVALLACALIALILFLPTWNASEQSLRKHSH</sequence>
<name>UHPT_CHLTR</name>
<proteinExistence type="inferred from homology"/>
<dbReference type="EMBL" id="AE001273">
    <property type="protein sequence ID" value="AAC68146.1"/>
    <property type="molecule type" value="Genomic_DNA"/>
</dbReference>
<dbReference type="PIR" id="A71501">
    <property type="entry name" value="A71501"/>
</dbReference>
<dbReference type="RefSeq" id="WP_009871908.1">
    <property type="nucleotide sequence ID" value="NC_000117.1"/>
</dbReference>
<dbReference type="SMR" id="O84548"/>
<dbReference type="FunCoup" id="O84548">
    <property type="interactions" value="66"/>
</dbReference>
<dbReference type="STRING" id="272561.CT_544"/>
<dbReference type="EnsemblBacteria" id="AAC68146">
    <property type="protein sequence ID" value="AAC68146"/>
    <property type="gene ID" value="CT_544"/>
</dbReference>
<dbReference type="KEGG" id="ctr:CT_544"/>
<dbReference type="PATRIC" id="fig|272561.5.peg.591"/>
<dbReference type="HOGENOM" id="CLU_001265_31_0_0"/>
<dbReference type="InParanoid" id="O84548"/>
<dbReference type="OrthoDB" id="9766638at2"/>
<dbReference type="Proteomes" id="UP000000431">
    <property type="component" value="Chromosome"/>
</dbReference>
<dbReference type="GO" id="GO:0005886">
    <property type="term" value="C:plasma membrane"/>
    <property type="evidence" value="ECO:0000318"/>
    <property type="project" value="GO_Central"/>
</dbReference>
<dbReference type="GO" id="GO:0061513">
    <property type="term" value="F:glucose 6-phosphate:phosphate antiporter activity"/>
    <property type="evidence" value="ECO:0000318"/>
    <property type="project" value="GO_Central"/>
</dbReference>
<dbReference type="GO" id="GO:0015760">
    <property type="term" value="P:glucose-6-phosphate transport"/>
    <property type="evidence" value="ECO:0000318"/>
    <property type="project" value="GO_Central"/>
</dbReference>
<dbReference type="GO" id="GO:0035435">
    <property type="term" value="P:phosphate ion transmembrane transport"/>
    <property type="evidence" value="ECO:0000318"/>
    <property type="project" value="GO_Central"/>
</dbReference>
<dbReference type="Gene3D" id="1.20.1250.20">
    <property type="entry name" value="MFS general substrate transporter like domains"/>
    <property type="match status" value="2"/>
</dbReference>
<dbReference type="InterPro" id="IPR011701">
    <property type="entry name" value="MFS"/>
</dbReference>
<dbReference type="InterPro" id="IPR020846">
    <property type="entry name" value="MFS_dom"/>
</dbReference>
<dbReference type="InterPro" id="IPR036259">
    <property type="entry name" value="MFS_trans_sf"/>
</dbReference>
<dbReference type="InterPro" id="IPR051337">
    <property type="entry name" value="OPA_Antiporter"/>
</dbReference>
<dbReference type="InterPro" id="IPR021159">
    <property type="entry name" value="Sugar-P_transporter_CS"/>
</dbReference>
<dbReference type="InterPro" id="IPR000849">
    <property type="entry name" value="Sugar_P_transporter"/>
</dbReference>
<dbReference type="NCBIfam" id="TIGR00881">
    <property type="entry name" value="2A0104"/>
    <property type="match status" value="1"/>
</dbReference>
<dbReference type="PANTHER" id="PTHR43826">
    <property type="entry name" value="GLUCOSE-6-PHOSPHATE EXCHANGER SLC37A4"/>
    <property type="match status" value="1"/>
</dbReference>
<dbReference type="PANTHER" id="PTHR43826:SF3">
    <property type="entry name" value="GLUCOSE-6-PHOSPHATE EXCHANGER SLC37A4"/>
    <property type="match status" value="1"/>
</dbReference>
<dbReference type="Pfam" id="PF07690">
    <property type="entry name" value="MFS_1"/>
    <property type="match status" value="1"/>
</dbReference>
<dbReference type="PIRSF" id="PIRSF002808">
    <property type="entry name" value="Hexose_phosphate_transp"/>
    <property type="match status" value="1"/>
</dbReference>
<dbReference type="SUPFAM" id="SSF103473">
    <property type="entry name" value="MFS general substrate transporter"/>
    <property type="match status" value="1"/>
</dbReference>
<dbReference type="PROSITE" id="PS00942">
    <property type="entry name" value="GLPT"/>
    <property type="match status" value="1"/>
</dbReference>
<dbReference type="PROSITE" id="PS50850">
    <property type="entry name" value="MFS"/>
    <property type="match status" value="1"/>
</dbReference>
<accession>O84548</accession>
<keyword id="KW-1003">Cell membrane</keyword>
<keyword id="KW-0472">Membrane</keyword>
<keyword id="KW-1185">Reference proteome</keyword>
<keyword id="KW-0762">Sugar transport</keyword>
<keyword id="KW-0812">Transmembrane</keyword>
<keyword id="KW-1133">Transmembrane helix</keyword>
<keyword id="KW-0813">Transport</keyword>
<reference key="1">
    <citation type="journal article" date="1998" name="Science">
        <title>Genome sequence of an obligate intracellular pathogen of humans: Chlamydia trachomatis.</title>
        <authorList>
            <person name="Stephens R.S."/>
            <person name="Kalman S."/>
            <person name="Lammel C.J."/>
            <person name="Fan J."/>
            <person name="Marathe R."/>
            <person name="Aravind L."/>
            <person name="Mitchell W.P."/>
            <person name="Olinger L."/>
            <person name="Tatusov R.L."/>
            <person name="Zhao Q."/>
            <person name="Koonin E.V."/>
            <person name="Davis R.W."/>
        </authorList>
    </citation>
    <scope>NUCLEOTIDE SEQUENCE [LARGE SCALE GENOMIC DNA]</scope>
    <source>
        <strain>ATCC VR-885 / DSM 19411 / UW-3/Cx</strain>
    </source>
</reference>
<organism>
    <name type="scientific">Chlamydia trachomatis serovar D (strain ATCC VR-885 / DSM 19411 / UW-3/Cx)</name>
    <dbReference type="NCBI Taxonomy" id="272561"/>
    <lineage>
        <taxon>Bacteria</taxon>
        <taxon>Pseudomonadati</taxon>
        <taxon>Chlamydiota</taxon>
        <taxon>Chlamydiia</taxon>
        <taxon>Chlamydiales</taxon>
        <taxon>Chlamydiaceae</taxon>
        <taxon>Chlamydia/Chlamydophila group</taxon>
        <taxon>Chlamydia</taxon>
    </lineage>
</organism>